<protein>
    <recommendedName>
        <fullName evidence="1">Carbamoyl phosphate synthase small chain</fullName>
        <ecNumber evidence="1">6.3.5.5</ecNumber>
    </recommendedName>
    <alternativeName>
        <fullName evidence="1">Carbamoyl phosphate synthetase glutamine chain</fullName>
    </alternativeName>
</protein>
<comment type="function">
    <text evidence="1">Small subunit of the glutamine-dependent carbamoyl phosphate synthetase (CPSase). CPSase catalyzes the formation of carbamoyl phosphate from the ammonia moiety of glutamine, carbonate, and phosphate donated by ATP, constituting the first step of 2 biosynthetic pathways, one leading to arginine and/or urea and the other to pyrimidine nucleotides. The small subunit (glutamine amidotransferase) binds and cleaves glutamine to supply the large subunit with the substrate ammonia.</text>
</comment>
<comment type="catalytic activity">
    <reaction evidence="1">
        <text>hydrogencarbonate + L-glutamine + 2 ATP + H2O = carbamoyl phosphate + L-glutamate + 2 ADP + phosphate + 2 H(+)</text>
        <dbReference type="Rhea" id="RHEA:18633"/>
        <dbReference type="ChEBI" id="CHEBI:15377"/>
        <dbReference type="ChEBI" id="CHEBI:15378"/>
        <dbReference type="ChEBI" id="CHEBI:17544"/>
        <dbReference type="ChEBI" id="CHEBI:29985"/>
        <dbReference type="ChEBI" id="CHEBI:30616"/>
        <dbReference type="ChEBI" id="CHEBI:43474"/>
        <dbReference type="ChEBI" id="CHEBI:58228"/>
        <dbReference type="ChEBI" id="CHEBI:58359"/>
        <dbReference type="ChEBI" id="CHEBI:456216"/>
        <dbReference type="EC" id="6.3.5.5"/>
    </reaction>
</comment>
<comment type="catalytic activity">
    <molecule>Carbamoyl phosphate synthase small chain</molecule>
    <reaction evidence="1">
        <text>L-glutamine + H2O = L-glutamate + NH4(+)</text>
        <dbReference type="Rhea" id="RHEA:15889"/>
        <dbReference type="ChEBI" id="CHEBI:15377"/>
        <dbReference type="ChEBI" id="CHEBI:28938"/>
        <dbReference type="ChEBI" id="CHEBI:29985"/>
        <dbReference type="ChEBI" id="CHEBI:58359"/>
    </reaction>
</comment>
<comment type="pathway">
    <text evidence="1">Amino-acid biosynthesis; L-arginine biosynthesis; carbamoyl phosphate from bicarbonate: step 1/1.</text>
</comment>
<comment type="pathway">
    <text evidence="1">Pyrimidine metabolism; UMP biosynthesis via de novo pathway; (S)-dihydroorotate from bicarbonate: step 1/3.</text>
</comment>
<comment type="subunit">
    <text evidence="1">Composed of two chains; the small (or glutamine) chain promotes the hydrolysis of glutamine to ammonia, which is used by the large (or ammonia) chain to synthesize carbamoyl phosphate. Tetramer of heterodimers (alpha,beta)4.</text>
</comment>
<comment type="similarity">
    <text evidence="1">Belongs to the CarA family.</text>
</comment>
<dbReference type="EC" id="6.3.5.5" evidence="1"/>
<dbReference type="EMBL" id="AE000512">
    <property type="protein sequence ID" value="AAD35643.1"/>
    <property type="molecule type" value="Genomic_DNA"/>
</dbReference>
<dbReference type="PIR" id="D72363">
    <property type="entry name" value="D72363"/>
</dbReference>
<dbReference type="RefSeq" id="NP_228368.1">
    <property type="nucleotide sequence ID" value="NC_000853.1"/>
</dbReference>
<dbReference type="RefSeq" id="WP_004081322.1">
    <property type="nucleotide sequence ID" value="NC_000853.1"/>
</dbReference>
<dbReference type="SMR" id="Q9WZ28"/>
<dbReference type="FunCoup" id="Q9WZ28">
    <property type="interactions" value="386"/>
</dbReference>
<dbReference type="STRING" id="243274.TM_0558"/>
<dbReference type="PaxDb" id="243274-THEMA_01885"/>
<dbReference type="EnsemblBacteria" id="AAD35643">
    <property type="protein sequence ID" value="AAD35643"/>
    <property type="gene ID" value="TM_0558"/>
</dbReference>
<dbReference type="KEGG" id="tma:TM0558"/>
<dbReference type="KEGG" id="tmi:THEMA_01885"/>
<dbReference type="KEGG" id="tmm:Tmari_0555"/>
<dbReference type="KEGG" id="tmw:THMA_0571"/>
<dbReference type="eggNOG" id="COG0505">
    <property type="taxonomic scope" value="Bacteria"/>
</dbReference>
<dbReference type="InParanoid" id="Q9WZ28"/>
<dbReference type="OrthoDB" id="9804328at2"/>
<dbReference type="UniPathway" id="UPA00068">
    <property type="reaction ID" value="UER00171"/>
</dbReference>
<dbReference type="UniPathway" id="UPA00070">
    <property type="reaction ID" value="UER00115"/>
</dbReference>
<dbReference type="Proteomes" id="UP000008183">
    <property type="component" value="Chromosome"/>
</dbReference>
<dbReference type="GO" id="GO:0005951">
    <property type="term" value="C:carbamoyl-phosphate synthase complex"/>
    <property type="evidence" value="ECO:0000318"/>
    <property type="project" value="GO_Central"/>
</dbReference>
<dbReference type="GO" id="GO:0005737">
    <property type="term" value="C:cytoplasm"/>
    <property type="evidence" value="ECO:0000318"/>
    <property type="project" value="GO_Central"/>
</dbReference>
<dbReference type="GO" id="GO:0005524">
    <property type="term" value="F:ATP binding"/>
    <property type="evidence" value="ECO:0007669"/>
    <property type="project" value="UniProtKB-UniRule"/>
</dbReference>
<dbReference type="GO" id="GO:0004088">
    <property type="term" value="F:carbamoyl-phosphate synthase (glutamine-hydrolyzing) activity"/>
    <property type="evidence" value="ECO:0007669"/>
    <property type="project" value="UniProtKB-UniRule"/>
</dbReference>
<dbReference type="GO" id="GO:0004359">
    <property type="term" value="F:glutaminase activity"/>
    <property type="evidence" value="ECO:0007669"/>
    <property type="project" value="RHEA"/>
</dbReference>
<dbReference type="GO" id="GO:0006207">
    <property type="term" value="P:'de novo' pyrimidine nucleobase biosynthetic process"/>
    <property type="evidence" value="ECO:0007669"/>
    <property type="project" value="InterPro"/>
</dbReference>
<dbReference type="GO" id="GO:0044205">
    <property type="term" value="P:'de novo' UMP biosynthetic process"/>
    <property type="evidence" value="ECO:0007669"/>
    <property type="project" value="UniProtKB-UniRule"/>
</dbReference>
<dbReference type="GO" id="GO:0006541">
    <property type="term" value="P:glutamine metabolic process"/>
    <property type="evidence" value="ECO:0007669"/>
    <property type="project" value="InterPro"/>
</dbReference>
<dbReference type="GO" id="GO:0006526">
    <property type="term" value="P:L-arginine biosynthetic process"/>
    <property type="evidence" value="ECO:0000318"/>
    <property type="project" value="GO_Central"/>
</dbReference>
<dbReference type="CDD" id="cd01744">
    <property type="entry name" value="GATase1_CPSase"/>
    <property type="match status" value="1"/>
</dbReference>
<dbReference type="FunFam" id="3.50.30.20:FF:000001">
    <property type="entry name" value="Carbamoyl-phosphate synthase small chain"/>
    <property type="match status" value="1"/>
</dbReference>
<dbReference type="Gene3D" id="3.40.50.880">
    <property type="match status" value="1"/>
</dbReference>
<dbReference type="Gene3D" id="3.50.30.20">
    <property type="entry name" value="Carbamoyl-phosphate synthase small subunit, N-terminal domain"/>
    <property type="match status" value="1"/>
</dbReference>
<dbReference type="HAMAP" id="MF_01209">
    <property type="entry name" value="CPSase_S_chain"/>
    <property type="match status" value="1"/>
</dbReference>
<dbReference type="InterPro" id="IPR006274">
    <property type="entry name" value="CarbamoylP_synth_ssu"/>
</dbReference>
<dbReference type="InterPro" id="IPR002474">
    <property type="entry name" value="CarbamoylP_synth_ssu_N"/>
</dbReference>
<dbReference type="InterPro" id="IPR036480">
    <property type="entry name" value="CarbP_synth_ssu_N_sf"/>
</dbReference>
<dbReference type="InterPro" id="IPR029062">
    <property type="entry name" value="Class_I_gatase-like"/>
</dbReference>
<dbReference type="InterPro" id="IPR035686">
    <property type="entry name" value="CPSase_GATase1"/>
</dbReference>
<dbReference type="InterPro" id="IPR017926">
    <property type="entry name" value="GATASE"/>
</dbReference>
<dbReference type="NCBIfam" id="TIGR01368">
    <property type="entry name" value="CPSaseIIsmall"/>
    <property type="match status" value="1"/>
</dbReference>
<dbReference type="NCBIfam" id="NF009475">
    <property type="entry name" value="PRK12838.1"/>
    <property type="match status" value="1"/>
</dbReference>
<dbReference type="PANTHER" id="PTHR11405:SF4">
    <property type="entry name" value="CARBAMOYL-PHOSPHATE SYNTHASE ARGININE-SPECIFIC SMALL CHAIN"/>
    <property type="match status" value="1"/>
</dbReference>
<dbReference type="PANTHER" id="PTHR11405">
    <property type="entry name" value="CARBAMOYLTRANSFERASE FAMILY MEMBER"/>
    <property type="match status" value="1"/>
</dbReference>
<dbReference type="Pfam" id="PF00988">
    <property type="entry name" value="CPSase_sm_chain"/>
    <property type="match status" value="1"/>
</dbReference>
<dbReference type="Pfam" id="PF00117">
    <property type="entry name" value="GATase"/>
    <property type="match status" value="1"/>
</dbReference>
<dbReference type="PRINTS" id="PR00099">
    <property type="entry name" value="CPSGATASE"/>
</dbReference>
<dbReference type="PRINTS" id="PR00096">
    <property type="entry name" value="GATASE"/>
</dbReference>
<dbReference type="SMART" id="SM01097">
    <property type="entry name" value="CPSase_sm_chain"/>
    <property type="match status" value="1"/>
</dbReference>
<dbReference type="SUPFAM" id="SSF52021">
    <property type="entry name" value="Carbamoyl phosphate synthetase, small subunit N-terminal domain"/>
    <property type="match status" value="1"/>
</dbReference>
<dbReference type="SUPFAM" id="SSF52317">
    <property type="entry name" value="Class I glutamine amidotransferase-like"/>
    <property type="match status" value="1"/>
</dbReference>
<dbReference type="PROSITE" id="PS51273">
    <property type="entry name" value="GATASE_TYPE_1"/>
    <property type="match status" value="1"/>
</dbReference>
<keyword id="KW-0028">Amino-acid biosynthesis</keyword>
<keyword id="KW-0055">Arginine biosynthesis</keyword>
<keyword id="KW-0067">ATP-binding</keyword>
<keyword id="KW-0315">Glutamine amidotransferase</keyword>
<keyword id="KW-0436">Ligase</keyword>
<keyword id="KW-0547">Nucleotide-binding</keyword>
<keyword id="KW-0665">Pyrimidine biosynthesis</keyword>
<keyword id="KW-1185">Reference proteome</keyword>
<gene>
    <name evidence="1" type="primary">carA</name>
    <name type="ordered locus">TM_0558</name>
</gene>
<sequence length="392" mass="42930">MSKKALLALEDGSFFFGQSLGAEGETFGELVFNTGMTGYQEVLTDPSYTGQIVVMTYPEIGIYGVNDEDVESDGIKVAGFVVYRSVDTPSNWRATMSFPDYLKKYNIVAIEGVDTRALTRKIRVKGAMKGAISTVDLDPDSLVKRVKESPSIVGRDLAGLVSPKEVIVENPEGDFSVVVLDSGVKWGILRDLKRVGAKVMRVPYSVDIDDIKKLNPDGVLISNGPGDPAALLKTIRLIKDLLKEEIPLAGICLGHQLLGLAVGGRTYKMKFGHRGINHPVKDLRTGRVLITTHNHGFAVDPKSFGLPELGSEDQDANVLTKNLQKISVLEGISPQGIKVEITHISLNDGTMEGMRLVDYPAFSVQYHPEASPGPHDAKYFFEEFKRLIKEVR</sequence>
<name>CARA_THEMA</name>
<reference key="1">
    <citation type="journal article" date="1999" name="Nature">
        <title>Evidence for lateral gene transfer between Archaea and Bacteria from genome sequence of Thermotoga maritima.</title>
        <authorList>
            <person name="Nelson K.E."/>
            <person name="Clayton R.A."/>
            <person name="Gill S.R."/>
            <person name="Gwinn M.L."/>
            <person name="Dodson R.J."/>
            <person name="Haft D.H."/>
            <person name="Hickey E.K."/>
            <person name="Peterson J.D."/>
            <person name="Nelson W.C."/>
            <person name="Ketchum K.A."/>
            <person name="McDonald L.A."/>
            <person name="Utterback T.R."/>
            <person name="Malek J.A."/>
            <person name="Linher K.D."/>
            <person name="Garrett M.M."/>
            <person name="Stewart A.M."/>
            <person name="Cotton M.D."/>
            <person name="Pratt M.S."/>
            <person name="Phillips C.A."/>
            <person name="Richardson D.L."/>
            <person name="Heidelberg J.F."/>
            <person name="Sutton G.G."/>
            <person name="Fleischmann R.D."/>
            <person name="Eisen J.A."/>
            <person name="White O."/>
            <person name="Salzberg S.L."/>
            <person name="Smith H.O."/>
            <person name="Venter J.C."/>
            <person name="Fraser C.M."/>
        </authorList>
    </citation>
    <scope>NUCLEOTIDE SEQUENCE [LARGE SCALE GENOMIC DNA]</scope>
    <source>
        <strain>ATCC 43589 / DSM 3109 / JCM 10099 / NBRC 100826 / MSB8</strain>
    </source>
</reference>
<organism>
    <name type="scientific">Thermotoga maritima (strain ATCC 43589 / DSM 3109 / JCM 10099 / NBRC 100826 / MSB8)</name>
    <dbReference type="NCBI Taxonomy" id="243274"/>
    <lineage>
        <taxon>Bacteria</taxon>
        <taxon>Thermotogati</taxon>
        <taxon>Thermotogota</taxon>
        <taxon>Thermotogae</taxon>
        <taxon>Thermotogales</taxon>
        <taxon>Thermotogaceae</taxon>
        <taxon>Thermotoga</taxon>
    </lineage>
</organism>
<proteinExistence type="inferred from homology"/>
<feature type="chain" id="PRO_0000112340" description="Carbamoyl phosphate synthase small chain">
    <location>
        <begin position="1"/>
        <end position="392"/>
    </location>
</feature>
<feature type="domain" description="Glutamine amidotransferase type-1" evidence="1">
    <location>
        <begin position="176"/>
        <end position="392"/>
    </location>
</feature>
<feature type="region of interest" description="CPSase" evidence="1">
    <location>
        <begin position="1"/>
        <end position="174"/>
    </location>
</feature>
<feature type="active site" description="Nucleophile" evidence="1">
    <location>
        <position position="252"/>
    </location>
</feature>
<feature type="active site" evidence="1">
    <location>
        <position position="367"/>
    </location>
</feature>
<feature type="active site" evidence="1">
    <location>
        <position position="369"/>
    </location>
</feature>
<feature type="binding site" evidence="1">
    <location>
        <position position="47"/>
    </location>
    <ligand>
        <name>L-glutamine</name>
        <dbReference type="ChEBI" id="CHEBI:58359"/>
    </ligand>
</feature>
<feature type="binding site" evidence="1">
    <location>
        <position position="224"/>
    </location>
    <ligand>
        <name>L-glutamine</name>
        <dbReference type="ChEBI" id="CHEBI:58359"/>
    </ligand>
</feature>
<feature type="binding site" evidence="1">
    <location>
        <position position="226"/>
    </location>
    <ligand>
        <name>L-glutamine</name>
        <dbReference type="ChEBI" id="CHEBI:58359"/>
    </ligand>
</feature>
<feature type="binding site" evidence="1">
    <location>
        <position position="253"/>
    </location>
    <ligand>
        <name>L-glutamine</name>
        <dbReference type="ChEBI" id="CHEBI:58359"/>
    </ligand>
</feature>
<feature type="binding site" evidence="1">
    <location>
        <position position="256"/>
    </location>
    <ligand>
        <name>L-glutamine</name>
        <dbReference type="ChEBI" id="CHEBI:58359"/>
    </ligand>
</feature>
<feature type="binding site" evidence="1">
    <location>
        <position position="294"/>
    </location>
    <ligand>
        <name>L-glutamine</name>
        <dbReference type="ChEBI" id="CHEBI:58359"/>
    </ligand>
</feature>
<feature type="binding site" evidence="1">
    <location>
        <position position="296"/>
    </location>
    <ligand>
        <name>L-glutamine</name>
        <dbReference type="ChEBI" id="CHEBI:58359"/>
    </ligand>
</feature>
<feature type="binding site" evidence="1">
    <location>
        <position position="297"/>
    </location>
    <ligand>
        <name>L-glutamine</name>
        <dbReference type="ChEBI" id="CHEBI:58359"/>
    </ligand>
</feature>
<accession>Q9WZ28</accession>
<evidence type="ECO:0000255" key="1">
    <source>
        <dbReference type="HAMAP-Rule" id="MF_01209"/>
    </source>
</evidence>